<organism>
    <name type="scientific">Staphylococcus aureus (strain N315)</name>
    <dbReference type="NCBI Taxonomy" id="158879"/>
    <lineage>
        <taxon>Bacteria</taxon>
        <taxon>Bacillati</taxon>
        <taxon>Bacillota</taxon>
        <taxon>Bacilli</taxon>
        <taxon>Bacillales</taxon>
        <taxon>Staphylococcaceae</taxon>
        <taxon>Staphylococcus</taxon>
    </lineage>
</organism>
<name>GATD_STAAN</name>
<accession>A0A0H3JN63</accession>
<keyword id="KW-0002">3D-structure</keyword>
<keyword id="KW-0133">Cell shape</keyword>
<keyword id="KW-0961">Cell wall biogenesis/degradation</keyword>
<keyword id="KW-0315">Glutamine amidotransferase</keyword>
<keyword id="KW-0378">Hydrolase</keyword>
<keyword id="KW-0436">Ligase</keyword>
<keyword id="KW-0573">Peptidoglycan synthesis</keyword>
<reference key="1">
    <citation type="journal article" date="2001" name="Lancet">
        <title>Whole genome sequencing of meticillin-resistant Staphylococcus aureus.</title>
        <authorList>
            <person name="Kuroda M."/>
            <person name="Ohta T."/>
            <person name="Uchiyama I."/>
            <person name="Baba T."/>
            <person name="Yuzawa H."/>
            <person name="Kobayashi I."/>
            <person name="Cui L."/>
            <person name="Oguchi A."/>
            <person name="Aoki K."/>
            <person name="Nagai Y."/>
            <person name="Lian J.-Q."/>
            <person name="Ito T."/>
            <person name="Kanamori M."/>
            <person name="Matsumaru H."/>
            <person name="Maruyama A."/>
            <person name="Murakami H."/>
            <person name="Hosoyama A."/>
            <person name="Mizutani-Ui Y."/>
            <person name="Takahashi N.K."/>
            <person name="Sawano T."/>
            <person name="Inoue R."/>
            <person name="Kaito C."/>
            <person name="Sekimizu K."/>
            <person name="Hirakawa H."/>
            <person name="Kuhara S."/>
            <person name="Goto S."/>
            <person name="Yabuzaki J."/>
            <person name="Kanehisa M."/>
            <person name="Yamashita A."/>
            <person name="Oshima K."/>
            <person name="Furuya K."/>
            <person name="Yoshino C."/>
            <person name="Shiba T."/>
            <person name="Hattori M."/>
            <person name="Ogasawara N."/>
            <person name="Hayashi H."/>
            <person name="Hiramatsu K."/>
        </authorList>
    </citation>
    <scope>NUCLEOTIDE SEQUENCE [LARGE SCALE GENOMIC DNA]</scope>
    <source>
        <strain>N315</strain>
    </source>
</reference>
<reference key="2">
    <citation type="journal article" date="2012" name="PLoS Pathog.">
        <title>Identification and in vitro analysis of the GatD/MurT enzyme-complex catalyzing lipid II amidation in Staphylococcus aureus.</title>
        <authorList>
            <person name="Muench D."/>
            <person name="Roemer T."/>
            <person name="Lee S.H."/>
            <person name="Engeser M."/>
            <person name="Sahl H.G."/>
            <person name="Schneider T."/>
        </authorList>
    </citation>
    <scope>FUNCTION</scope>
    <scope>CATALYTIC ACTIVITY</scope>
    <scope>BIOPHYSICOCHEMICAL PROPERTIES</scope>
    <scope>PATHWAY</scope>
    <scope>SUBUNIT</scope>
    <scope>DISRUPTION PHENOTYPE</scope>
    <scope>ACTIVE SITE</scope>
    <scope>MUTAGENESIS OF CYS-94</scope>
    <source>
        <strain>N315</strain>
    </source>
</reference>
<reference evidence="11 12" key="3">
    <citation type="journal article" date="2018" name="Sci. Rep.">
        <title>Structural basis of cell wall peptidoglycan amidation by the GatD/MurT complex of Staphylococcus aureus.</title>
        <authorList>
            <person name="Noldeke E.R."/>
            <person name="Muckenfuss L.M."/>
            <person name="Niemann V."/>
            <person name="Muller A."/>
            <person name="Stork E."/>
            <person name="Zocher G."/>
            <person name="Schneider T."/>
            <person name="Stehle T."/>
        </authorList>
    </citation>
    <scope>X-RAY CRYSTALLOGRAPHY (2.04 ANGSTROMS) IN COMPLEXES WITH MURT</scope>
    <scope>FUNCTION</scope>
    <scope>CATALYTIC ACTIVITY</scope>
    <scope>SUBUNIT</scope>
    <scope>DOMAIN</scope>
    <scope>ACTIVE SITE</scope>
    <scope>MUTAGENESIS OF CYS-94</scope>
</reference>
<comment type="function">
    <text evidence="4 5">The lipid II isoglutaminyl synthase complex catalyzes the formation of alpha-D-isoglutamine in the cell wall lipid II stem peptide (PubMed:22291598, PubMed:30154570). The GatD subunit catalyzes the hydrolysis of glutamine to glutamate and ammonia. The resulting ammonia molecule is channeled to the active site of MurT (PubMed:22291598).</text>
</comment>
<comment type="catalytic activity">
    <reaction evidence="2 4 5">
        <text>beta-D-GlcNAc-(1-&gt;4)-Mur2Ac(oyl-L-Ala-gamma-D-Glu-L-Lys-D-Ala-D-Ala)-di-trans,octa-cis-undecaprenyl diphosphate + L-glutamine + ATP + H2O = beta-D-GlcNAc-(1-&gt;4)-Mur2Ac(oyl-L-Ala-D-isoglutaminyl-L-Lys-D-Ala-D-Ala)-di-trans,octa-cis-undecaprenyl diphosphate + L-glutamate + ADP + phosphate + H(+)</text>
        <dbReference type="Rhea" id="RHEA:57928"/>
        <dbReference type="ChEBI" id="CHEBI:15377"/>
        <dbReference type="ChEBI" id="CHEBI:15378"/>
        <dbReference type="ChEBI" id="CHEBI:29985"/>
        <dbReference type="ChEBI" id="CHEBI:30616"/>
        <dbReference type="ChEBI" id="CHEBI:43474"/>
        <dbReference type="ChEBI" id="CHEBI:58359"/>
        <dbReference type="ChEBI" id="CHEBI:60033"/>
        <dbReference type="ChEBI" id="CHEBI:62233"/>
        <dbReference type="ChEBI" id="CHEBI:456216"/>
        <dbReference type="EC" id="6.3.5.13"/>
    </reaction>
</comment>
<comment type="catalytic activity">
    <reaction evidence="2 4">
        <text>L-glutamine + H2O = L-glutamate + NH4(+)</text>
        <dbReference type="Rhea" id="RHEA:15889"/>
        <dbReference type="ChEBI" id="CHEBI:15377"/>
        <dbReference type="ChEBI" id="CHEBI:28938"/>
        <dbReference type="ChEBI" id="CHEBI:29985"/>
        <dbReference type="ChEBI" id="CHEBI:58359"/>
        <dbReference type="EC" id="3.5.1.2"/>
    </reaction>
</comment>
<comment type="biophysicochemical properties">
    <phDependence>
        <text evidence="4">Optimum pH is 7.5-7.8 for isoglutaminyl synthase activity.</text>
    </phDependence>
</comment>
<comment type="pathway">
    <text evidence="2 4">Cell wall biogenesis; peptidoglycan biosynthesis.</text>
</comment>
<comment type="subunit">
    <text evidence="2 4 5">Forms a heterodimer with MurT.</text>
</comment>
<comment type="domain">
    <text evidence="5">The GatD/MurT complex has an open, boomerang-shaped conformation in which GatD is docked onto one end of MurT. Both proteins contribute to the catalytic triad.</text>
</comment>
<comment type="disruption phenotype">
    <text evidence="4">The gatD-murT double mutant displays susceptibility to diverse carbapenem and cephalosporin beta-lactam antibiotics and shows increased susceptibility to plectasin.</text>
</comment>
<comment type="similarity">
    <text evidence="2 7">Belongs to the CobB/CobQ family. GatD subfamily.</text>
</comment>
<evidence type="ECO:0000250" key="1">
    <source>
        <dbReference type="UniProtKB" id="A0A0H2WZ38"/>
    </source>
</evidence>
<evidence type="ECO:0000255" key="2">
    <source>
        <dbReference type="HAMAP-Rule" id="MF_02213"/>
    </source>
</evidence>
<evidence type="ECO:0000255" key="3">
    <source>
        <dbReference type="PROSITE-ProRule" id="PRU00606"/>
    </source>
</evidence>
<evidence type="ECO:0000269" key="4">
    <source>
    </source>
</evidence>
<evidence type="ECO:0000269" key="5">
    <source>
    </source>
</evidence>
<evidence type="ECO:0000303" key="6">
    <source>
    </source>
</evidence>
<evidence type="ECO:0000305" key="7"/>
<evidence type="ECO:0000305" key="8">
    <source>
    </source>
</evidence>
<evidence type="ECO:0000305" key="9">
    <source>
    </source>
</evidence>
<evidence type="ECO:0000312" key="10">
    <source>
        <dbReference type="EMBL" id="BAB42977.1"/>
    </source>
</evidence>
<evidence type="ECO:0007744" key="11">
    <source>
        <dbReference type="PDB" id="6GS2"/>
    </source>
</evidence>
<evidence type="ECO:0007744" key="12">
    <source>
        <dbReference type="PDB" id="6H5E"/>
    </source>
</evidence>
<evidence type="ECO:0007829" key="13">
    <source>
        <dbReference type="PDB" id="6GS2"/>
    </source>
</evidence>
<evidence type="ECO:0007829" key="14">
    <source>
        <dbReference type="PDB" id="6H5E"/>
    </source>
</evidence>
<dbReference type="EC" id="6.3.5.13" evidence="2 4 5"/>
<dbReference type="EC" id="3.5.1.2" evidence="2 4"/>
<dbReference type="EMBL" id="BA000018">
    <property type="protein sequence ID" value="BAB42977.1"/>
    <property type="molecule type" value="Genomic_DNA"/>
</dbReference>
<dbReference type="RefSeq" id="WP_000544969.1">
    <property type="nucleotide sequence ID" value="NC_002745.2"/>
</dbReference>
<dbReference type="PDB" id="6GS2">
    <property type="method" value="X-ray"/>
    <property type="resolution" value="2.04 A"/>
    <property type="chains" value="A/C=1-243"/>
</dbReference>
<dbReference type="PDB" id="6H5E">
    <property type="method" value="X-ray"/>
    <property type="resolution" value="2.14 A"/>
    <property type="chains" value="A/C=1-243"/>
</dbReference>
<dbReference type="PDBsum" id="6GS2"/>
<dbReference type="PDBsum" id="6H5E"/>
<dbReference type="SMR" id="A0A0H3JN63"/>
<dbReference type="EnsemblBacteria" id="BAB42977">
    <property type="protein sequence ID" value="BAB42977"/>
    <property type="gene ID" value="BAB42977"/>
</dbReference>
<dbReference type="KEGG" id="sau:SA1707"/>
<dbReference type="HOGENOM" id="CLU_064047_0_0_9"/>
<dbReference type="BRENDA" id="6.3.5.13">
    <property type="organism ID" value="3352"/>
</dbReference>
<dbReference type="UniPathway" id="UPA00219"/>
<dbReference type="GO" id="GO:0140282">
    <property type="term" value="F:carbon-nitrogen ligase activity on lipid II"/>
    <property type="evidence" value="ECO:0000314"/>
    <property type="project" value="CACAO"/>
</dbReference>
<dbReference type="GO" id="GO:0004359">
    <property type="term" value="F:glutaminase activity"/>
    <property type="evidence" value="ECO:0007669"/>
    <property type="project" value="UniProtKB-UniRule"/>
</dbReference>
<dbReference type="GO" id="GO:0071555">
    <property type="term" value="P:cell wall organization"/>
    <property type="evidence" value="ECO:0007669"/>
    <property type="project" value="UniProtKB-KW"/>
</dbReference>
<dbReference type="GO" id="GO:0009236">
    <property type="term" value="P:cobalamin biosynthetic process"/>
    <property type="evidence" value="ECO:0007669"/>
    <property type="project" value="InterPro"/>
</dbReference>
<dbReference type="GO" id="GO:0009252">
    <property type="term" value="P:peptidoglycan biosynthetic process"/>
    <property type="evidence" value="ECO:0007669"/>
    <property type="project" value="UniProtKB-UniRule"/>
</dbReference>
<dbReference type="GO" id="GO:0008360">
    <property type="term" value="P:regulation of cell shape"/>
    <property type="evidence" value="ECO:0007669"/>
    <property type="project" value="UniProtKB-KW"/>
</dbReference>
<dbReference type="CDD" id="cd01750">
    <property type="entry name" value="GATase1_CobQ"/>
    <property type="match status" value="1"/>
</dbReference>
<dbReference type="Gene3D" id="3.40.50.880">
    <property type="match status" value="1"/>
</dbReference>
<dbReference type="HAMAP" id="MF_02213">
    <property type="entry name" value="Lipid_II_synth_GatD"/>
    <property type="match status" value="1"/>
</dbReference>
<dbReference type="InterPro" id="IPR029062">
    <property type="entry name" value="Class_I_gatase-like"/>
</dbReference>
<dbReference type="InterPro" id="IPR033949">
    <property type="entry name" value="CobQ_GATase1"/>
</dbReference>
<dbReference type="InterPro" id="IPR011698">
    <property type="entry name" value="GATase_3"/>
</dbReference>
<dbReference type="InterPro" id="IPR043702">
    <property type="entry name" value="Lipid_II_synth_GatD"/>
</dbReference>
<dbReference type="PANTHER" id="PTHR21343">
    <property type="entry name" value="DETHIOBIOTIN SYNTHETASE"/>
    <property type="match status" value="1"/>
</dbReference>
<dbReference type="PANTHER" id="PTHR21343:SF9">
    <property type="entry name" value="LIPID II ISOGLUTAMINYL SYNTHASE (GLUTAMINE-HYDROLYZING) SUBUNIT GATD"/>
    <property type="match status" value="1"/>
</dbReference>
<dbReference type="Pfam" id="PF07685">
    <property type="entry name" value="GATase_3"/>
    <property type="match status" value="1"/>
</dbReference>
<dbReference type="SUPFAM" id="SSF52317">
    <property type="entry name" value="Class I glutamine amidotransferase-like"/>
    <property type="match status" value="1"/>
</dbReference>
<dbReference type="PROSITE" id="PS51274">
    <property type="entry name" value="GATASE_COBBQ"/>
    <property type="match status" value="1"/>
</dbReference>
<protein>
    <recommendedName>
        <fullName evidence="2 7">Lipid II isoglutaminyl synthase (glutamine-hydrolyzing) subunit GatD</fullName>
        <ecNumber evidence="2 4 5">6.3.5.13</ecNumber>
    </recommendedName>
    <alternativeName>
        <fullName evidence="2 7">Lipid II isoglutaminyl synthase glutaminase subunit</fullName>
        <ecNumber evidence="2 4">3.5.1.2</ecNumber>
    </alternativeName>
</protein>
<proteinExistence type="evidence at protein level"/>
<feature type="chain" id="PRO_0000446941" description="Lipid II isoglutaminyl synthase (glutamine-hydrolyzing) subunit GatD">
    <location>
        <begin position="1"/>
        <end position="243"/>
    </location>
</feature>
<feature type="domain" description="GATase cobBQ-type" evidence="3">
    <location>
        <begin position="6"/>
        <end position="197"/>
    </location>
</feature>
<feature type="active site" description="Nucleophile" evidence="2 3 8 9">
    <location>
        <position position="94"/>
    </location>
</feature>
<feature type="active site" evidence="2 3">
    <location>
        <position position="189"/>
    </location>
</feature>
<feature type="binding site" evidence="1 2">
    <location>
        <position position="128"/>
    </location>
    <ligand>
        <name>substrate</name>
    </ligand>
</feature>
<feature type="mutagenesis site" description="Cannot use glutamine. Abolishes amidation of lipid II." evidence="4 5">
    <original>C</original>
    <variation>G</variation>
    <variation>S</variation>
    <location>
        <position position="94"/>
    </location>
</feature>
<feature type="strand" evidence="13">
    <location>
        <begin position="3"/>
        <end position="9"/>
    </location>
</feature>
<feature type="turn" evidence="14">
    <location>
        <begin position="10"/>
        <end position="13"/>
    </location>
</feature>
<feature type="helix" evidence="13">
    <location>
        <begin position="17"/>
        <end position="31"/>
    </location>
</feature>
<feature type="turn" evidence="13">
    <location>
        <begin position="32"/>
        <end position="34"/>
    </location>
</feature>
<feature type="strand" evidence="13">
    <location>
        <begin position="36"/>
        <end position="43"/>
    </location>
</feature>
<feature type="strand" evidence="13">
    <location>
        <begin position="54"/>
        <end position="58"/>
    </location>
</feature>
<feature type="helix" evidence="13">
    <location>
        <begin position="63"/>
        <end position="73"/>
    </location>
</feature>
<feature type="helix" evidence="13">
    <location>
        <begin position="74"/>
        <end position="76"/>
    </location>
</feature>
<feature type="helix" evidence="13">
    <location>
        <begin position="77"/>
        <end position="85"/>
    </location>
</feature>
<feature type="strand" evidence="13">
    <location>
        <begin position="90"/>
        <end position="93"/>
    </location>
</feature>
<feature type="helix" evidence="13">
    <location>
        <begin position="95"/>
        <end position="98"/>
    </location>
</feature>
<feature type="strand" evidence="13">
    <location>
        <begin position="101"/>
        <end position="105"/>
    </location>
</feature>
<feature type="strand" evidence="13">
    <location>
        <begin position="111"/>
        <end position="113"/>
    </location>
</feature>
<feature type="strand" evidence="13">
    <location>
        <begin position="117"/>
        <end position="119"/>
    </location>
</feature>
<feature type="strand" evidence="13">
    <location>
        <begin position="121"/>
        <end position="136"/>
    </location>
</feature>
<feature type="strand" evidence="13">
    <location>
        <begin position="138"/>
        <end position="140"/>
    </location>
</feature>
<feature type="strand" evidence="13">
    <location>
        <begin position="142"/>
        <end position="154"/>
    </location>
</feature>
<feature type="strand" evidence="13">
    <location>
        <begin position="160"/>
        <end position="166"/>
    </location>
</feature>
<feature type="strand" evidence="13">
    <location>
        <begin position="169"/>
        <end position="173"/>
    </location>
</feature>
<feature type="strand" evidence="13">
    <location>
        <begin position="175"/>
        <end position="180"/>
    </location>
</feature>
<feature type="strand" evidence="13">
    <location>
        <begin position="183"/>
        <end position="186"/>
    </location>
</feature>
<feature type="turn" evidence="13">
    <location>
        <begin position="193"/>
        <end position="195"/>
    </location>
</feature>
<feature type="helix" evidence="13">
    <location>
        <begin position="197"/>
        <end position="211"/>
    </location>
</feature>
<feature type="helix" evidence="13">
    <location>
        <begin position="223"/>
        <end position="243"/>
    </location>
</feature>
<gene>
    <name evidence="2 6" type="primary">gatD</name>
    <name evidence="10" type="ordered locus">SA1707</name>
</gene>
<sequence length="243" mass="27430">MHELTIYHFMSDKLNLYSDIGNIIALRQRAKKRNIKVNVVEINETEGITFDECDIFFIGGGSDREQALATKELSKIKTPLKEAIEDGMPGLTICGGYQFLGKKYITPDGTELEGLGILDFYTESKTNRLTGDIVIESDTFGTIVGFENHGGRTYHDFGTLGHVTFGYGNNDEDKKEGIHYKNLLGTYLHGPILPKNYEITDYLLEKACERKGIPFEPKEIDNEAEIQAKQVLIDRANRQKKSR</sequence>